<proteinExistence type="evidence at protein level"/>
<accession>O75792</accession>
<accession>B2RCY1</accession>
<accession>Q96F11</accession>
<gene>
    <name type="primary">RNASEH2A</name>
    <name type="synonym">RNASEHI</name>
    <name type="synonym">RNHIA</name>
</gene>
<organism>
    <name type="scientific">Homo sapiens</name>
    <name type="common">Human</name>
    <dbReference type="NCBI Taxonomy" id="9606"/>
    <lineage>
        <taxon>Eukaryota</taxon>
        <taxon>Metazoa</taxon>
        <taxon>Chordata</taxon>
        <taxon>Craniata</taxon>
        <taxon>Vertebrata</taxon>
        <taxon>Euteleostomi</taxon>
        <taxon>Mammalia</taxon>
        <taxon>Eutheria</taxon>
        <taxon>Euarchontoglires</taxon>
        <taxon>Primates</taxon>
        <taxon>Haplorrhini</taxon>
        <taxon>Catarrhini</taxon>
        <taxon>Hominidae</taxon>
        <taxon>Homo</taxon>
    </lineage>
</organism>
<dbReference type="EC" id="3.1.26.4"/>
<dbReference type="EMBL" id="Z97029">
    <property type="protein sequence ID" value="CAB09725.1"/>
    <property type="molecule type" value="mRNA"/>
</dbReference>
<dbReference type="EMBL" id="AK315327">
    <property type="protein sequence ID" value="BAG37728.1"/>
    <property type="molecule type" value="mRNA"/>
</dbReference>
<dbReference type="EMBL" id="CH471106">
    <property type="protein sequence ID" value="EAW84313.1"/>
    <property type="molecule type" value="Genomic_DNA"/>
</dbReference>
<dbReference type="EMBL" id="BC011748">
    <property type="protein sequence ID" value="AAH11748.1"/>
    <property type="molecule type" value="mRNA"/>
</dbReference>
<dbReference type="CCDS" id="CCDS12282.1"/>
<dbReference type="RefSeq" id="NP_006388.2">
    <property type="nucleotide sequence ID" value="NM_006397.2"/>
</dbReference>
<dbReference type="PDB" id="3P56">
    <property type="method" value="X-ray"/>
    <property type="resolution" value="4.06 A"/>
    <property type="chains" value="A/D=1-299"/>
</dbReference>
<dbReference type="PDB" id="3PUF">
    <property type="method" value="X-ray"/>
    <property type="resolution" value="3.10 A"/>
    <property type="chains" value="A/D/G/J/M/P=1-299"/>
</dbReference>
<dbReference type="PDB" id="8YJZ">
    <property type="method" value="EM"/>
    <property type="resolution" value="5.15 A"/>
    <property type="chains" value="H=1-299"/>
</dbReference>
<dbReference type="PDBsum" id="3P56"/>
<dbReference type="PDBsum" id="3PUF"/>
<dbReference type="PDBsum" id="8YJZ"/>
<dbReference type="EMDB" id="EMD-39354"/>
<dbReference type="SMR" id="O75792"/>
<dbReference type="BioGRID" id="115789">
    <property type="interactions" value="79"/>
</dbReference>
<dbReference type="ComplexPortal" id="CPX-745">
    <property type="entry name" value="RNase H2 complex"/>
</dbReference>
<dbReference type="FunCoup" id="O75792">
    <property type="interactions" value="1693"/>
</dbReference>
<dbReference type="IntAct" id="O75792">
    <property type="interactions" value="48"/>
</dbReference>
<dbReference type="MINT" id="O75792"/>
<dbReference type="STRING" id="9606.ENSP00000221486"/>
<dbReference type="GlyGen" id="O75792">
    <property type="glycosylation" value="1 site, 1 O-linked glycan (1 site)"/>
</dbReference>
<dbReference type="iPTMnet" id="O75792"/>
<dbReference type="PhosphoSitePlus" id="O75792"/>
<dbReference type="BioMuta" id="RNASEH2A"/>
<dbReference type="jPOST" id="O75792"/>
<dbReference type="MassIVE" id="O75792"/>
<dbReference type="PaxDb" id="9606-ENSP00000221486"/>
<dbReference type="PeptideAtlas" id="O75792"/>
<dbReference type="ProteomicsDB" id="50197"/>
<dbReference type="Pumba" id="O75792"/>
<dbReference type="Antibodypedia" id="13379">
    <property type="antibodies" value="185 antibodies from 29 providers"/>
</dbReference>
<dbReference type="CPTC" id="O75792">
    <property type="antibodies" value="1 antibody"/>
</dbReference>
<dbReference type="DNASU" id="10535"/>
<dbReference type="Ensembl" id="ENST00000221486.6">
    <property type="protein sequence ID" value="ENSP00000221486.4"/>
    <property type="gene ID" value="ENSG00000104889.7"/>
</dbReference>
<dbReference type="GeneID" id="10535"/>
<dbReference type="KEGG" id="hsa:10535"/>
<dbReference type="MANE-Select" id="ENST00000221486.6">
    <property type="protein sequence ID" value="ENSP00000221486.4"/>
    <property type="RefSeq nucleotide sequence ID" value="NM_006397.3"/>
    <property type="RefSeq protein sequence ID" value="NP_006388.2"/>
</dbReference>
<dbReference type="UCSC" id="uc002mvg.2">
    <property type="organism name" value="human"/>
</dbReference>
<dbReference type="AGR" id="HGNC:18518"/>
<dbReference type="CTD" id="10535"/>
<dbReference type="DisGeNET" id="10535"/>
<dbReference type="GeneCards" id="RNASEH2A"/>
<dbReference type="GeneReviews" id="RNASEH2A"/>
<dbReference type="HGNC" id="HGNC:18518">
    <property type="gene designation" value="RNASEH2A"/>
</dbReference>
<dbReference type="HPA" id="ENSG00000104889">
    <property type="expression patterns" value="Low tissue specificity"/>
</dbReference>
<dbReference type="MalaCards" id="RNASEH2A"/>
<dbReference type="MIM" id="606034">
    <property type="type" value="gene"/>
</dbReference>
<dbReference type="MIM" id="610333">
    <property type="type" value="phenotype"/>
</dbReference>
<dbReference type="neXtProt" id="NX_O75792"/>
<dbReference type="OpenTargets" id="ENSG00000104889"/>
<dbReference type="Orphanet" id="51">
    <property type="disease" value="Aicardi-Goutieres syndrome"/>
</dbReference>
<dbReference type="PharmGKB" id="PA38565"/>
<dbReference type="VEuPathDB" id="HostDB:ENSG00000104889"/>
<dbReference type="eggNOG" id="KOG2299">
    <property type="taxonomic scope" value="Eukaryota"/>
</dbReference>
<dbReference type="GeneTree" id="ENSGT00390000010768"/>
<dbReference type="HOGENOM" id="CLU_036532_0_3_1"/>
<dbReference type="InParanoid" id="O75792"/>
<dbReference type="OMA" id="REECRFF"/>
<dbReference type="OrthoDB" id="7462577at2759"/>
<dbReference type="PAN-GO" id="O75792">
    <property type="GO annotations" value="4 GO annotations based on evolutionary models"/>
</dbReference>
<dbReference type="PhylomeDB" id="O75792"/>
<dbReference type="TreeFam" id="TF314302"/>
<dbReference type="BioCyc" id="MetaCyc:HS02645-MONOMER"/>
<dbReference type="BRENDA" id="3.1.26.4">
    <property type="organism ID" value="2681"/>
</dbReference>
<dbReference type="PathwayCommons" id="O75792"/>
<dbReference type="SignaLink" id="O75792"/>
<dbReference type="BioGRID-ORCS" id="10535">
    <property type="hits" value="245 hits in 1164 CRISPR screens"/>
</dbReference>
<dbReference type="ChiTaRS" id="RNASEH2A">
    <property type="organism name" value="human"/>
</dbReference>
<dbReference type="EvolutionaryTrace" id="O75792"/>
<dbReference type="GeneWiki" id="RNASEH2A"/>
<dbReference type="GenomeRNAi" id="10535"/>
<dbReference type="Pharos" id="O75792">
    <property type="development level" value="Tbio"/>
</dbReference>
<dbReference type="PRO" id="PR:O75792"/>
<dbReference type="Proteomes" id="UP000005640">
    <property type="component" value="Chromosome 19"/>
</dbReference>
<dbReference type="RNAct" id="O75792">
    <property type="molecule type" value="protein"/>
</dbReference>
<dbReference type="Bgee" id="ENSG00000104889">
    <property type="expression patterns" value="Expressed in ganglionic eminence and 101 other cell types or tissues"/>
</dbReference>
<dbReference type="ExpressionAtlas" id="O75792">
    <property type="expression patterns" value="baseline and differential"/>
</dbReference>
<dbReference type="GO" id="GO:0005829">
    <property type="term" value="C:cytosol"/>
    <property type="evidence" value="ECO:0000314"/>
    <property type="project" value="HPA"/>
</dbReference>
<dbReference type="GO" id="GO:0005654">
    <property type="term" value="C:nucleoplasm"/>
    <property type="evidence" value="ECO:0000314"/>
    <property type="project" value="HPA"/>
</dbReference>
<dbReference type="GO" id="GO:0032299">
    <property type="term" value="C:ribonuclease H2 complex"/>
    <property type="evidence" value="ECO:0000314"/>
    <property type="project" value="UniProtKB"/>
</dbReference>
<dbReference type="GO" id="GO:0046872">
    <property type="term" value="F:metal ion binding"/>
    <property type="evidence" value="ECO:0007669"/>
    <property type="project" value="UniProtKB-KW"/>
</dbReference>
<dbReference type="GO" id="GO:0003723">
    <property type="term" value="F:RNA binding"/>
    <property type="evidence" value="ECO:0007669"/>
    <property type="project" value="InterPro"/>
</dbReference>
<dbReference type="GO" id="GO:0004540">
    <property type="term" value="F:RNA nuclease activity"/>
    <property type="evidence" value="ECO:0000304"/>
    <property type="project" value="ProtInc"/>
</dbReference>
<dbReference type="GO" id="GO:0004523">
    <property type="term" value="F:RNA-DNA hybrid ribonuclease activity"/>
    <property type="evidence" value="ECO:0000314"/>
    <property type="project" value="UniProtKB"/>
</dbReference>
<dbReference type="GO" id="GO:0006260">
    <property type="term" value="P:DNA replication"/>
    <property type="evidence" value="ECO:0000304"/>
    <property type="project" value="UniProtKB"/>
</dbReference>
<dbReference type="GO" id="GO:0043137">
    <property type="term" value="P:DNA replication, removal of RNA primer"/>
    <property type="evidence" value="ECO:0000318"/>
    <property type="project" value="GO_Central"/>
</dbReference>
<dbReference type="GO" id="GO:0006298">
    <property type="term" value="P:mismatch repair"/>
    <property type="evidence" value="ECO:0000314"/>
    <property type="project" value="MGI"/>
</dbReference>
<dbReference type="GO" id="GO:0006401">
    <property type="term" value="P:RNA catabolic process"/>
    <property type="evidence" value="ECO:0000314"/>
    <property type="project" value="UniProtKB"/>
</dbReference>
<dbReference type="CDD" id="cd07181">
    <property type="entry name" value="RNase_HII_eukaryota_like"/>
    <property type="match status" value="1"/>
</dbReference>
<dbReference type="FunFam" id="1.10.10.460:FF:000001">
    <property type="entry name" value="Ribonuclease"/>
    <property type="match status" value="1"/>
</dbReference>
<dbReference type="FunFam" id="3.30.420.10:FF:000016">
    <property type="entry name" value="Ribonuclease"/>
    <property type="match status" value="1"/>
</dbReference>
<dbReference type="Gene3D" id="3.30.420.10">
    <property type="entry name" value="Ribonuclease H-like superfamily/Ribonuclease H"/>
    <property type="match status" value="1"/>
</dbReference>
<dbReference type="Gene3D" id="1.10.10.460">
    <property type="entry name" value="Ribonuclease hii. Domain 2"/>
    <property type="match status" value="1"/>
</dbReference>
<dbReference type="IDEAL" id="IID00601"/>
<dbReference type="InterPro" id="IPR004649">
    <property type="entry name" value="RNase_H2_suA"/>
</dbReference>
<dbReference type="InterPro" id="IPR001352">
    <property type="entry name" value="RNase_HII/HIII"/>
</dbReference>
<dbReference type="InterPro" id="IPR024567">
    <property type="entry name" value="RNase_HII/HIII_dom"/>
</dbReference>
<dbReference type="InterPro" id="IPR023160">
    <property type="entry name" value="RNase_HII_hlx-loop-hlx_cap_dom"/>
</dbReference>
<dbReference type="InterPro" id="IPR012337">
    <property type="entry name" value="RNaseH-like_sf"/>
</dbReference>
<dbReference type="InterPro" id="IPR036397">
    <property type="entry name" value="RNaseH_sf"/>
</dbReference>
<dbReference type="NCBIfam" id="TIGR00729">
    <property type="entry name" value="ribonuclease HII"/>
    <property type="match status" value="1"/>
</dbReference>
<dbReference type="PANTHER" id="PTHR10954">
    <property type="entry name" value="RIBONUCLEASE H2 SUBUNIT A"/>
    <property type="match status" value="1"/>
</dbReference>
<dbReference type="PANTHER" id="PTHR10954:SF7">
    <property type="entry name" value="RIBONUCLEASE H2 SUBUNIT A"/>
    <property type="match status" value="1"/>
</dbReference>
<dbReference type="Pfam" id="PF01351">
    <property type="entry name" value="RNase_HII"/>
    <property type="match status" value="1"/>
</dbReference>
<dbReference type="SUPFAM" id="SSF53098">
    <property type="entry name" value="Ribonuclease H-like"/>
    <property type="match status" value="1"/>
</dbReference>
<dbReference type="PROSITE" id="PS51975">
    <property type="entry name" value="RNASE_H_2"/>
    <property type="match status" value="1"/>
</dbReference>
<reference key="1">
    <citation type="journal article" date="1998" name="Proc. Natl. Acad. Sci. U.S.A.">
        <title>Cloning of the cDNA encoding the large subunit of human RNase HI, a homologue of the prokaryotic RNase HII.</title>
        <authorList>
            <person name="Frank P."/>
            <person name="Braunshofer-Reiter C."/>
            <person name="Wintersberger U."/>
            <person name="Grimm R."/>
            <person name="Buesen W."/>
        </authorList>
    </citation>
    <scope>NUCLEOTIDE SEQUENCE [MRNA]</scope>
</reference>
<reference key="2">
    <citation type="journal article" date="2004" name="Nat. Genet.">
        <title>Complete sequencing and characterization of 21,243 full-length human cDNAs.</title>
        <authorList>
            <person name="Ota T."/>
            <person name="Suzuki Y."/>
            <person name="Nishikawa T."/>
            <person name="Otsuki T."/>
            <person name="Sugiyama T."/>
            <person name="Irie R."/>
            <person name="Wakamatsu A."/>
            <person name="Hayashi K."/>
            <person name="Sato H."/>
            <person name="Nagai K."/>
            <person name="Kimura K."/>
            <person name="Makita H."/>
            <person name="Sekine M."/>
            <person name="Obayashi M."/>
            <person name="Nishi T."/>
            <person name="Shibahara T."/>
            <person name="Tanaka T."/>
            <person name="Ishii S."/>
            <person name="Yamamoto J."/>
            <person name="Saito K."/>
            <person name="Kawai Y."/>
            <person name="Isono Y."/>
            <person name="Nakamura Y."/>
            <person name="Nagahari K."/>
            <person name="Murakami K."/>
            <person name="Yasuda T."/>
            <person name="Iwayanagi T."/>
            <person name="Wagatsuma M."/>
            <person name="Shiratori A."/>
            <person name="Sudo H."/>
            <person name="Hosoiri T."/>
            <person name="Kaku Y."/>
            <person name="Kodaira H."/>
            <person name="Kondo H."/>
            <person name="Sugawara M."/>
            <person name="Takahashi M."/>
            <person name="Kanda K."/>
            <person name="Yokoi T."/>
            <person name="Furuya T."/>
            <person name="Kikkawa E."/>
            <person name="Omura Y."/>
            <person name="Abe K."/>
            <person name="Kamihara K."/>
            <person name="Katsuta N."/>
            <person name="Sato K."/>
            <person name="Tanikawa M."/>
            <person name="Yamazaki M."/>
            <person name="Ninomiya K."/>
            <person name="Ishibashi T."/>
            <person name="Yamashita H."/>
            <person name="Murakawa K."/>
            <person name="Fujimori K."/>
            <person name="Tanai H."/>
            <person name="Kimata M."/>
            <person name="Watanabe M."/>
            <person name="Hiraoka S."/>
            <person name="Chiba Y."/>
            <person name="Ishida S."/>
            <person name="Ono Y."/>
            <person name="Takiguchi S."/>
            <person name="Watanabe S."/>
            <person name="Yosida M."/>
            <person name="Hotuta T."/>
            <person name="Kusano J."/>
            <person name="Kanehori K."/>
            <person name="Takahashi-Fujii A."/>
            <person name="Hara H."/>
            <person name="Tanase T.-O."/>
            <person name="Nomura Y."/>
            <person name="Togiya S."/>
            <person name="Komai F."/>
            <person name="Hara R."/>
            <person name="Takeuchi K."/>
            <person name="Arita M."/>
            <person name="Imose N."/>
            <person name="Musashino K."/>
            <person name="Yuuki H."/>
            <person name="Oshima A."/>
            <person name="Sasaki N."/>
            <person name="Aotsuka S."/>
            <person name="Yoshikawa Y."/>
            <person name="Matsunawa H."/>
            <person name="Ichihara T."/>
            <person name="Shiohata N."/>
            <person name="Sano S."/>
            <person name="Moriya S."/>
            <person name="Momiyama H."/>
            <person name="Satoh N."/>
            <person name="Takami S."/>
            <person name="Terashima Y."/>
            <person name="Suzuki O."/>
            <person name="Nakagawa S."/>
            <person name="Senoh A."/>
            <person name="Mizoguchi H."/>
            <person name="Goto Y."/>
            <person name="Shimizu F."/>
            <person name="Wakebe H."/>
            <person name="Hishigaki H."/>
            <person name="Watanabe T."/>
            <person name="Sugiyama A."/>
            <person name="Takemoto M."/>
            <person name="Kawakami B."/>
            <person name="Yamazaki M."/>
            <person name="Watanabe K."/>
            <person name="Kumagai A."/>
            <person name="Itakura S."/>
            <person name="Fukuzumi Y."/>
            <person name="Fujimori Y."/>
            <person name="Komiyama M."/>
            <person name="Tashiro H."/>
            <person name="Tanigami A."/>
            <person name="Fujiwara T."/>
            <person name="Ono T."/>
            <person name="Yamada K."/>
            <person name="Fujii Y."/>
            <person name="Ozaki K."/>
            <person name="Hirao M."/>
            <person name="Ohmori Y."/>
            <person name="Kawabata A."/>
            <person name="Hikiji T."/>
            <person name="Kobatake N."/>
            <person name="Inagaki H."/>
            <person name="Ikema Y."/>
            <person name="Okamoto S."/>
            <person name="Okitani R."/>
            <person name="Kawakami T."/>
            <person name="Noguchi S."/>
            <person name="Itoh T."/>
            <person name="Shigeta K."/>
            <person name="Senba T."/>
            <person name="Matsumura K."/>
            <person name="Nakajima Y."/>
            <person name="Mizuno T."/>
            <person name="Morinaga M."/>
            <person name="Sasaki M."/>
            <person name="Togashi T."/>
            <person name="Oyama M."/>
            <person name="Hata H."/>
            <person name="Watanabe M."/>
            <person name="Komatsu T."/>
            <person name="Mizushima-Sugano J."/>
            <person name="Satoh T."/>
            <person name="Shirai Y."/>
            <person name="Takahashi Y."/>
            <person name="Nakagawa K."/>
            <person name="Okumura K."/>
            <person name="Nagase T."/>
            <person name="Nomura N."/>
            <person name="Kikuchi H."/>
            <person name="Masuho Y."/>
            <person name="Yamashita R."/>
            <person name="Nakai K."/>
            <person name="Yada T."/>
            <person name="Nakamura Y."/>
            <person name="Ohara O."/>
            <person name="Isogai T."/>
            <person name="Sugano S."/>
        </authorList>
    </citation>
    <scope>NUCLEOTIDE SEQUENCE [LARGE SCALE MRNA]</scope>
    <source>
        <tissue>Thalamus</tissue>
    </source>
</reference>
<reference key="3">
    <citation type="submission" date="2005-07" db="EMBL/GenBank/DDBJ databases">
        <authorList>
            <person name="Mural R.J."/>
            <person name="Istrail S."/>
            <person name="Sutton G.G."/>
            <person name="Florea L."/>
            <person name="Halpern A.L."/>
            <person name="Mobarry C.M."/>
            <person name="Lippert R."/>
            <person name="Walenz B."/>
            <person name="Shatkay H."/>
            <person name="Dew I."/>
            <person name="Miller J.R."/>
            <person name="Flanigan M.J."/>
            <person name="Edwards N.J."/>
            <person name="Bolanos R."/>
            <person name="Fasulo D."/>
            <person name="Halldorsson B.V."/>
            <person name="Hannenhalli S."/>
            <person name="Turner R."/>
            <person name="Yooseph S."/>
            <person name="Lu F."/>
            <person name="Nusskern D.R."/>
            <person name="Shue B.C."/>
            <person name="Zheng X.H."/>
            <person name="Zhong F."/>
            <person name="Delcher A.L."/>
            <person name="Huson D.H."/>
            <person name="Kravitz S.A."/>
            <person name="Mouchard L."/>
            <person name="Reinert K."/>
            <person name="Remington K.A."/>
            <person name="Clark A.G."/>
            <person name="Waterman M.S."/>
            <person name="Eichler E.E."/>
            <person name="Adams M.D."/>
            <person name="Hunkapiller M.W."/>
            <person name="Myers E.W."/>
            <person name="Venter J.C."/>
        </authorList>
    </citation>
    <scope>NUCLEOTIDE SEQUENCE [LARGE SCALE GENOMIC DNA]</scope>
</reference>
<reference key="4">
    <citation type="journal article" date="2004" name="Genome Res.">
        <title>The status, quality, and expansion of the NIH full-length cDNA project: the Mammalian Gene Collection (MGC).</title>
        <authorList>
            <consortium name="The MGC Project Team"/>
        </authorList>
    </citation>
    <scope>NUCLEOTIDE SEQUENCE [LARGE SCALE MRNA]</scope>
    <source>
        <tissue>Brain</tissue>
    </source>
</reference>
<reference key="5">
    <citation type="journal article" date="2008" name="Proc. Natl. Acad. Sci. U.S.A.">
        <title>A quantitative atlas of mitotic phosphorylation.</title>
        <authorList>
            <person name="Dephoure N."/>
            <person name="Zhou C."/>
            <person name="Villen J."/>
            <person name="Beausoleil S.A."/>
            <person name="Bakalarski C.E."/>
            <person name="Elledge S.J."/>
            <person name="Gygi S.P."/>
        </authorList>
    </citation>
    <scope>PHOSPHORYLATION [LARGE SCALE ANALYSIS] AT THR-204 AND THR-216</scope>
    <scope>IDENTIFICATION BY MASS SPECTROMETRY [LARGE SCALE ANALYSIS]</scope>
    <source>
        <tissue>Cervix carcinoma</tissue>
    </source>
</reference>
<reference key="6">
    <citation type="journal article" date="2011" name="BMC Syst. Biol.">
        <title>Initial characterization of the human central proteome.</title>
        <authorList>
            <person name="Burkard T.R."/>
            <person name="Planyavsky M."/>
            <person name="Kaupe I."/>
            <person name="Breitwieser F.P."/>
            <person name="Buerckstuemmer T."/>
            <person name="Bennett K.L."/>
            <person name="Superti-Furga G."/>
            <person name="Colinge J."/>
        </authorList>
    </citation>
    <scope>IDENTIFICATION BY MASS SPECTROMETRY [LARGE SCALE ANALYSIS]</scope>
</reference>
<reference key="7">
    <citation type="journal article" date="2012" name="Mol. Cell. Proteomics">
        <title>Comparative large-scale characterisation of plant vs. mammal proteins reveals similar and idiosyncratic N-alpha acetylation features.</title>
        <authorList>
            <person name="Bienvenut W.V."/>
            <person name="Sumpton D."/>
            <person name="Martinez A."/>
            <person name="Lilla S."/>
            <person name="Espagne C."/>
            <person name="Meinnel T."/>
            <person name="Giglione C."/>
        </authorList>
    </citation>
    <scope>ACETYLATION [LARGE SCALE ANALYSIS] AT MET-1</scope>
    <scope>IDENTIFICATION BY MASS SPECTROMETRY [LARGE SCALE ANALYSIS]</scope>
</reference>
<reference key="8">
    <citation type="journal article" date="2012" name="Proc. Natl. Acad. Sci. U.S.A.">
        <title>N-terminal acetylome analyses and functional insights of the N-terminal acetyltransferase NatB.</title>
        <authorList>
            <person name="Van Damme P."/>
            <person name="Lasa M."/>
            <person name="Polevoda B."/>
            <person name="Gazquez C."/>
            <person name="Elosegui-Artola A."/>
            <person name="Kim D.S."/>
            <person name="De Juan-Pardo E."/>
            <person name="Demeyer K."/>
            <person name="Hole K."/>
            <person name="Larrea E."/>
            <person name="Timmerman E."/>
            <person name="Prieto J."/>
            <person name="Arnesen T."/>
            <person name="Sherman F."/>
            <person name="Gevaert K."/>
            <person name="Aldabe R."/>
        </authorList>
    </citation>
    <scope>ACETYLATION [LARGE SCALE ANALYSIS] AT MET-1</scope>
    <scope>IDENTIFICATION BY MASS SPECTROMETRY [LARGE SCALE ANALYSIS]</scope>
</reference>
<reference key="9">
    <citation type="journal article" date="2013" name="J. Proteome Res.">
        <title>Toward a comprehensive characterization of a human cancer cell phosphoproteome.</title>
        <authorList>
            <person name="Zhou H."/>
            <person name="Di Palma S."/>
            <person name="Preisinger C."/>
            <person name="Peng M."/>
            <person name="Polat A.N."/>
            <person name="Heck A.J."/>
            <person name="Mohammed S."/>
        </authorList>
    </citation>
    <scope>PHOSPHORYLATION [LARGE SCALE ANALYSIS] AT SER-277</scope>
    <scope>IDENTIFICATION BY MASS SPECTROMETRY [LARGE SCALE ANALYSIS]</scope>
    <source>
        <tissue>Cervix carcinoma</tissue>
        <tissue>Erythroleukemia</tissue>
    </source>
</reference>
<reference key="10">
    <citation type="journal article" date="2011" name="J. Biol. Chem.">
        <title>The structural and biochemical characterization of human RNase H2 complex reveals the molecular basis for substrate recognition and Aicardi-Goutieres syndrome defects.</title>
        <authorList>
            <person name="Figiel M."/>
            <person name="Chon H."/>
            <person name="Cerritelli S.M."/>
            <person name="Cybulska M."/>
            <person name="Crouch R.J."/>
            <person name="Nowotny M."/>
        </authorList>
    </citation>
    <scope>X-RAY CRYSTALLOGRAPHY (3.1 ANGSTROMS)</scope>
    <scope>SUBUNIT</scope>
    <scope>FUNCTION</scope>
    <scope>CATALYTIC ACTIVITY</scope>
    <scope>COFACTOR</scope>
    <scope>MUTAGENESIS OF ASP-67; LYS-69; ASN-112; TYR-210 AND THR-240</scope>
</reference>
<reference key="11">
    <citation type="journal article" date="2006" name="Nat. Genet.">
        <title>Mutations in genes encoding ribonuclease H2 subunits cause Aicardi-Goutieres syndrome and mimic congenital viral brain infection.</title>
        <authorList>
            <person name="Crow Y.J."/>
            <person name="Leitch A."/>
            <person name="Hayward B.E."/>
            <person name="Garner A."/>
            <person name="Parmar R."/>
            <person name="Griffith E."/>
            <person name="Ali M."/>
            <person name="Semple C."/>
            <person name="Aicardi J."/>
            <person name="Babul-Hirji R."/>
            <person name="Baumann C."/>
            <person name="Baxter P."/>
            <person name="Bertini E."/>
            <person name="Chandler K.E."/>
            <person name="Chitayat D."/>
            <person name="Cau D."/>
            <person name="Dery C."/>
            <person name="Fazzi E."/>
            <person name="Goizet C."/>
            <person name="King M.D."/>
            <person name="Klepper J."/>
            <person name="Lacombe D."/>
            <person name="Lanzi G."/>
            <person name="Lyall H."/>
            <person name="Martinez-Frias M.L."/>
            <person name="Mathieu M."/>
            <person name="McKeown C."/>
            <person name="Monier A."/>
            <person name="Oade Y."/>
            <person name="Quarrell O.W."/>
            <person name="Rittey C.D."/>
            <person name="Rogers R.C."/>
            <person name="Sanchis A."/>
            <person name="Stephenson J.B.P."/>
            <person name="Tacke U."/>
            <person name="Till M."/>
            <person name="Tolmie J.L."/>
            <person name="Tomlin P."/>
            <person name="Voit T."/>
            <person name="Weschke B."/>
            <person name="Woods C.G."/>
            <person name="Lebon P."/>
            <person name="Bonthron D.T."/>
            <person name="Ponting C.P."/>
            <person name="Jackson A.P."/>
        </authorList>
    </citation>
    <scope>VARIANT AGS4 SER-37</scope>
    <scope>CHARACTERIZATION OF VARIANT AGS4 SER-37</scope>
    <scope>FUNCTION</scope>
    <scope>INTERACTION WITH RNASEH2B AND RNASEH2C</scope>
</reference>
<reference key="12">
    <citation type="journal article" date="2007" name="Am. J. Hum. Genet.">
        <title>Clinical and molecular phenotype of Aicardi-Goutieres syndrome.</title>
        <authorList>
            <person name="Rice G."/>
            <person name="Patrick T."/>
            <person name="Parmar R."/>
            <person name="Taylor C.F."/>
            <person name="Aeby A."/>
            <person name="Aicardi J."/>
            <person name="Artuch R."/>
            <person name="Montalto S.A."/>
            <person name="Bacino C.A."/>
            <person name="Barroso B."/>
            <person name="Baxter P."/>
            <person name="Benko W.S."/>
            <person name="Bergmann C."/>
            <person name="Bertini E."/>
            <person name="Biancheri R."/>
            <person name="Blair E.M."/>
            <person name="Blau N."/>
            <person name="Bonthron D.T."/>
            <person name="Briggs T."/>
            <person name="Brueton L.A."/>
            <person name="Brunner H.G."/>
            <person name="Burke C.J."/>
            <person name="Carr I.M."/>
            <person name="Carvalho D.R."/>
            <person name="Chandler K.E."/>
            <person name="Christen H.J."/>
            <person name="Corry P.C."/>
            <person name="Cowan F.M."/>
            <person name="Cox H."/>
            <person name="D'Arrigo S."/>
            <person name="Dean J."/>
            <person name="De Laet C."/>
            <person name="De Praeter C."/>
            <person name="Dery C."/>
            <person name="Ferrie C.D."/>
            <person name="Flintoff K."/>
            <person name="Frints S.G."/>
            <person name="Garcia-Cazorla A."/>
            <person name="Gener B."/>
            <person name="Goizet C."/>
            <person name="Goutieres F."/>
            <person name="Green A.J."/>
            <person name="Guet A."/>
            <person name="Hamel B.C."/>
            <person name="Hayward B.E."/>
            <person name="Heiberg A."/>
            <person name="Hennekam R.C."/>
            <person name="Husson M."/>
            <person name="Jackson A.P."/>
            <person name="Jayatunga R."/>
            <person name="Jiang Y.H."/>
            <person name="Kant S.G."/>
            <person name="Kao A."/>
            <person name="King M.D."/>
            <person name="Kingston H.M."/>
            <person name="Klepper J."/>
            <person name="van der Knaap M.S."/>
            <person name="Kornberg A.J."/>
            <person name="Kotzot D."/>
            <person name="Kratzer W."/>
            <person name="Lacombe D."/>
            <person name="Lagae L."/>
            <person name="Landrieu P.G."/>
            <person name="Lanzi G."/>
            <person name="Leitch A."/>
            <person name="Lim M.J."/>
            <person name="Livingston J.H."/>
            <person name="Lourenco C.M."/>
            <person name="Lyall E.G."/>
            <person name="Lynch S.A."/>
            <person name="Lyons M.J."/>
            <person name="Marom D."/>
            <person name="McClure J.P."/>
            <person name="McWilliam R."/>
            <person name="Melancon S.B."/>
            <person name="Mewasingh L.D."/>
            <person name="Moutard M.L."/>
            <person name="Nischal K.K."/>
            <person name="Ostergaard J.R."/>
            <person name="Prendiville J."/>
            <person name="Rasmussen M."/>
            <person name="Rogers R.C."/>
            <person name="Roland D."/>
            <person name="Rosser E.M."/>
            <person name="Rostasy K."/>
            <person name="Roubertie A."/>
            <person name="Sanchis A."/>
            <person name="Schiffmann R."/>
            <person name="Scholl-Burgi S."/>
            <person name="Seal S."/>
            <person name="Shalev S.A."/>
            <person name="Corcoles C.S."/>
            <person name="Sinha G.P."/>
            <person name="Soler D."/>
            <person name="Spiegel R."/>
            <person name="Stephenson J.B."/>
            <person name="Tacke U."/>
            <person name="Tan T.Y."/>
            <person name="Till M."/>
            <person name="Tolmie J.L."/>
            <person name="Tomlin P."/>
            <person name="Vagnarelli F."/>
            <person name="Valente E.M."/>
            <person name="Van Coster R.N."/>
            <person name="Van der Aa N."/>
            <person name="Vanderver A."/>
            <person name="Vles J.S."/>
            <person name="Voit T."/>
            <person name="Wassmer E."/>
            <person name="Weschke B."/>
            <person name="Whiteford M.L."/>
            <person name="Willemsen M.A."/>
            <person name="Zankl A."/>
            <person name="Zuberi S.M."/>
            <person name="Orcesi S."/>
            <person name="Fazzi E."/>
            <person name="Lebon P."/>
            <person name="Crow Y.J."/>
        </authorList>
    </citation>
    <scope>VARIANTS AGS4 SER-37; TRP-108; TRP-186; LEU-230; GLN-235; MET-240 AND HIS-291</scope>
    <scope>VARIANTS ASP-99; SER-202; GLU-205 AND GLY-260</scope>
</reference>
<reference key="13">
    <citation type="journal article" date="2010" name="Arthritis Rheum.">
        <title>Expanding the phenotypic spectrum of lupus erythematosus in Aicardi-Goutieres syndrome.</title>
        <authorList>
            <person name="Ramantani G."/>
            <person name="Kohlhase J."/>
            <person name="Hertzberg C."/>
            <person name="Innes A.M."/>
            <person name="Engel K."/>
            <person name="Hunger S."/>
            <person name="Borozdin W."/>
            <person name="Mah J.K."/>
            <person name="Ungerath K."/>
            <person name="Walkenhorst H."/>
            <person name="Richardt H.H."/>
            <person name="Buckard J."/>
            <person name="Bevot A."/>
            <person name="Siegel C."/>
            <person name="von Stuelpnagel C."/>
            <person name="Ikonomidou C."/>
            <person name="Thomas K."/>
            <person name="Proud V."/>
            <person name="Niemann F."/>
            <person name="Wieczorek D."/>
            <person name="Haeusler M."/>
            <person name="Niggemann P."/>
            <person name="Baltaci V."/>
            <person name="Conrad K."/>
            <person name="Lebon P."/>
            <person name="Lee-Kirsch M.A."/>
        </authorList>
    </citation>
    <scope>VARIANTS AGS4 2-ASP-LEU-3 DELINS TYR-PRO AND TRP-186</scope>
</reference>
<name>RNH2A_HUMAN</name>
<sequence>MDLSELERDNTGRCRLSSPVPAVCRKEPCVLGVDEAGRGPVLGPMVYAICYCPLPRLADLEALKVADSKTLLESERERLFAKMEDTDFVGWALDVLSPNLISTSMLGRVKYNLNSLSHDTATGLIQYALDQGVNVTQVFVDTVGMPETYQARLQQSFPGIEVTVKAKADALYPVVSAASICAKVARDQAVKKWQFVEKLQDLDTDYGSGYPNDPKTKAWLKEHVEPVFGFPQFVRFSWRTAQTILEKEAEDVIWEDSASENQEGLRKITSYFLNEGSQARPRSSHRYFLERGLESATSL</sequence>
<evidence type="ECO:0000250" key="1"/>
<evidence type="ECO:0000250" key="2">
    <source>
        <dbReference type="UniProtKB" id="Q9CWY8"/>
    </source>
</evidence>
<evidence type="ECO:0000255" key="3">
    <source>
        <dbReference type="PROSITE-ProRule" id="PRU01319"/>
    </source>
</evidence>
<evidence type="ECO:0000269" key="4">
    <source>
    </source>
</evidence>
<evidence type="ECO:0000269" key="5">
    <source>
    </source>
</evidence>
<evidence type="ECO:0000269" key="6">
    <source>
    </source>
</evidence>
<evidence type="ECO:0000269" key="7">
    <source>
    </source>
</evidence>
<evidence type="ECO:0000305" key="8"/>
<evidence type="ECO:0007744" key="9">
    <source>
    </source>
</evidence>
<evidence type="ECO:0007744" key="10">
    <source>
    </source>
</evidence>
<evidence type="ECO:0007744" key="11">
    <source>
    </source>
</evidence>
<evidence type="ECO:0007744" key="12">
    <source>
    </source>
</evidence>
<evidence type="ECO:0007829" key="13">
    <source>
        <dbReference type="PDB" id="3PUF"/>
    </source>
</evidence>
<comment type="function">
    <text evidence="4 7">Catalytic subunit of RNase HII, an endonuclease that specifically degrades the RNA of RNA:DNA hybrids. Participates in DNA replication, possibly by mediating the removal of lagging-strand Okazaki fragment RNA primers during DNA replication. Mediates the excision of single ribonucleotides from DNA:RNA duplexes.</text>
</comment>
<comment type="catalytic activity">
    <reaction evidence="7">
        <text>Endonucleolytic cleavage to 5'-phosphomonoester.</text>
        <dbReference type="EC" id="3.1.26.4"/>
    </reaction>
</comment>
<comment type="cofactor">
    <cofactor evidence="1">
        <name>Mn(2+)</name>
        <dbReference type="ChEBI" id="CHEBI:29035"/>
    </cofactor>
    <cofactor evidence="1">
        <name>Mg(2+)</name>
        <dbReference type="ChEBI" id="CHEBI:18420"/>
    </cofactor>
    <text evidence="1">Manganese or magnesium. Binds 1 divalent metal ion per monomer in the absence of substrate. May bind a second metal ion after substrate binding.</text>
</comment>
<comment type="subunit">
    <text evidence="7">The RNase H2 complex is a heterotrimer composed of the catalytic subunit RNASEH2A and the non-catalytic subunits RNASEH2B and RNASEH2C.</text>
</comment>
<comment type="interaction">
    <interactant intactId="EBI-9027352">
        <id>O75792</id>
    </interactant>
    <interactant intactId="EBI-3893468">
        <id>Q99943</id>
        <label>AGPAT1</label>
    </interactant>
    <organismsDiffer>false</organismsDiffer>
    <experiments>2</experiments>
</comment>
<comment type="subcellular location">
    <subcellularLocation>
        <location evidence="8">Nucleus</location>
    </subcellularLocation>
</comment>
<comment type="disease" evidence="4 5 6">
    <disease id="DI-00069">
        <name>Aicardi-Goutieres syndrome 4</name>
        <acronym>AGS4</acronym>
        <description>A form of Aicardi-Goutieres syndrome, a genetically heterogeneous disease characterized by cerebral atrophy, leukoencephalopathy, intracranial calcifications, chronic cerebrospinal fluid (CSF) lymphocytosis, increased CSF alpha-interferon, and negative serologic investigations for common prenatal infection. Clinical features as thrombocytopenia, hepatosplenomegaly and elevated hepatic transaminases along with intermittent fever may erroneously suggest an infective process. Severe neurological dysfunctions manifest in infancy as progressive microcephaly, spasticity, dystonic posturing and profound psychomotor retardation. Death often occurs in early childhood.</description>
        <dbReference type="MIM" id="610333"/>
    </disease>
    <text>The disease is caused by variants affecting the gene represented in this entry.</text>
</comment>
<comment type="similarity">
    <text evidence="8">Belongs to the RNase HII family. Eukaryotic subfamily.</text>
</comment>
<feature type="chain" id="PRO_0000111710" description="Ribonuclease H2 subunit A">
    <location>
        <begin position="1"/>
        <end position="299"/>
    </location>
</feature>
<feature type="domain" description="RNase H type-2" evidence="3">
    <location>
        <begin position="28"/>
        <end position="250"/>
    </location>
</feature>
<feature type="binding site" evidence="1">
    <location>
        <position position="34"/>
    </location>
    <ligand>
        <name>a divalent metal cation</name>
        <dbReference type="ChEBI" id="CHEBI:60240"/>
    </ligand>
</feature>
<feature type="binding site" evidence="1">
    <location>
        <position position="35"/>
    </location>
    <ligand>
        <name>a divalent metal cation</name>
        <dbReference type="ChEBI" id="CHEBI:60240"/>
    </ligand>
</feature>
<feature type="binding site" evidence="1">
    <location>
        <position position="141"/>
    </location>
    <ligand>
        <name>a divalent metal cation</name>
        <dbReference type="ChEBI" id="CHEBI:60240"/>
    </ligand>
</feature>
<feature type="modified residue" description="N-acetylmethionine" evidence="10 11">
    <location>
        <position position="1"/>
    </location>
</feature>
<feature type="modified residue" description="Phosphothreonine" evidence="9">
    <location>
        <position position="204"/>
    </location>
</feature>
<feature type="modified residue" description="Phosphothreonine" evidence="9">
    <location>
        <position position="216"/>
    </location>
</feature>
<feature type="modified residue" description="Phosphoserine" evidence="2">
    <location>
        <position position="257"/>
    </location>
</feature>
<feature type="modified residue" description="Phosphoserine" evidence="12">
    <location>
        <position position="277"/>
    </location>
</feature>
<feature type="sequence variant" id="VAR_070623" description="In AGS4." evidence="6">
    <original>DL</original>
    <variation>YP</variation>
    <location>
        <begin position="2"/>
        <end position="3"/>
    </location>
</feature>
<feature type="sequence variant" id="VAR_027377" description="In AGS4; strongly impairs enzyme activity but not interaction with RNASEH2B and RNASEH2C; dbSNP:rs76857106." evidence="4 5">
    <original>G</original>
    <variation>S</variation>
    <location>
        <position position="37"/>
    </location>
</feature>
<feature type="sequence variant" id="VAR_070624" evidence="5">
    <original>N</original>
    <variation>D</variation>
    <location>
        <position position="99"/>
    </location>
</feature>
<feature type="sequence variant" id="VAR_070625" description="In AGS4; dbSNP:rs76436818." evidence="5">
    <original>R</original>
    <variation>W</variation>
    <location>
        <position position="108"/>
    </location>
</feature>
<feature type="sequence variant" id="VAR_070626" description="In AGS4; dbSNP:rs77103971." evidence="5 6">
    <original>R</original>
    <variation>W</variation>
    <location>
        <position position="186"/>
    </location>
</feature>
<feature type="sequence variant" id="VAR_024617" description="In dbSNP:rs7247284." evidence="5">
    <original>L</original>
    <variation>S</variation>
    <location>
        <position position="202"/>
    </location>
</feature>
<feature type="sequence variant" id="VAR_070627" description="In dbSNP:rs62619782." evidence="5">
    <original>D</original>
    <variation>E</variation>
    <location>
        <position position="205"/>
    </location>
</feature>
<feature type="sequence variant" id="VAR_070628" description="In AGS4; dbSNP:rs79767407." evidence="5">
    <original>F</original>
    <variation>L</variation>
    <location>
        <position position="230"/>
    </location>
</feature>
<feature type="sequence variant" id="VAR_070629" description="In AGS4; dbSNP:rs75718910." evidence="5">
    <original>R</original>
    <variation>Q</variation>
    <location>
        <position position="235"/>
    </location>
</feature>
<feature type="sequence variant" id="VAR_070630" description="In AGS4; dbSNP:rs79843600." evidence="5">
    <original>T</original>
    <variation>M</variation>
    <location>
        <position position="240"/>
    </location>
</feature>
<feature type="sequence variant" id="VAR_027378" description="In dbSNP:rs15389.">
    <original>A</original>
    <variation>G</variation>
    <location>
        <position position="258"/>
    </location>
</feature>
<feature type="sequence variant" id="VAR_070631" description="In dbSNP:rs770898096." evidence="5">
    <original>E</original>
    <variation>G</variation>
    <location>
        <position position="260"/>
    </location>
</feature>
<feature type="sequence variant" id="VAR_070632" description="In AGS4; dbSNP:rs75037667." evidence="5">
    <original>R</original>
    <variation>H</variation>
    <location>
        <position position="291"/>
    </location>
</feature>
<feature type="mutagenesis site" description="Loss of enzyme activity." evidence="7">
    <original>D</original>
    <variation>A</variation>
    <location>
        <position position="67"/>
    </location>
</feature>
<feature type="mutagenesis site" description="Strongly reduced enzyme activity." evidence="7">
    <original>K</original>
    <variation>A</variation>
    <location>
        <position position="69"/>
    </location>
</feature>
<feature type="mutagenesis site" description="Reduced enzyme activity." evidence="7">
    <original>N</original>
    <variation>A</variation>
    <location>
        <position position="112"/>
    </location>
</feature>
<feature type="mutagenesis site" description="Strongly reduced enzyme activity." evidence="7">
    <original>Y</original>
    <variation>A</variation>
    <location>
        <position position="210"/>
    </location>
</feature>
<feature type="mutagenesis site" description="Loss of enzyme activity." evidence="7">
    <original>Y</original>
    <variation>F</variation>
    <location>
        <position position="210"/>
    </location>
</feature>
<feature type="mutagenesis site" description="Strongly reduced enzyme activity." evidence="7">
    <original>T</original>
    <variation>A</variation>
    <location>
        <position position="240"/>
    </location>
</feature>
<feature type="sequence conflict" description="In Ref. 1; CAB09725." evidence="8" ref="1">
    <original>R</original>
    <variation>Q</variation>
    <location>
        <position position="152"/>
    </location>
</feature>
<feature type="helix" evidence="13">
    <location>
        <begin position="4"/>
        <end position="7"/>
    </location>
</feature>
<feature type="strand" evidence="13">
    <location>
        <begin position="15"/>
        <end position="17"/>
    </location>
</feature>
<feature type="helix" evidence="13">
    <location>
        <begin position="23"/>
        <end position="26"/>
    </location>
</feature>
<feature type="strand" evidence="13">
    <location>
        <begin position="29"/>
        <end position="36"/>
    </location>
</feature>
<feature type="strand" evidence="13">
    <location>
        <begin position="41"/>
        <end position="43"/>
    </location>
</feature>
<feature type="strand" evidence="13">
    <location>
        <begin position="45"/>
        <end position="54"/>
    </location>
</feature>
<feature type="helix" evidence="13">
    <location>
        <begin position="57"/>
        <end position="62"/>
    </location>
</feature>
<feature type="helix" evidence="13">
    <location>
        <begin position="73"/>
        <end position="84"/>
    </location>
</feature>
<feature type="strand" evidence="13">
    <location>
        <begin position="86"/>
        <end position="88"/>
    </location>
</feature>
<feature type="strand" evidence="13">
    <location>
        <begin position="90"/>
        <end position="96"/>
    </location>
</feature>
<feature type="helix" evidence="13">
    <location>
        <begin position="98"/>
        <end position="105"/>
    </location>
</feature>
<feature type="strand" evidence="13">
    <location>
        <begin position="107"/>
        <end position="109"/>
    </location>
</feature>
<feature type="helix" evidence="13">
    <location>
        <begin position="113"/>
        <end position="130"/>
    </location>
</feature>
<feature type="strand" evidence="13">
    <location>
        <begin position="135"/>
        <end position="144"/>
    </location>
</feature>
<feature type="helix" evidence="13">
    <location>
        <begin position="146"/>
        <end position="156"/>
    </location>
</feature>
<feature type="strand" evidence="13">
    <location>
        <begin position="160"/>
        <end position="166"/>
    </location>
</feature>
<feature type="helix" evidence="13">
    <location>
        <begin position="168"/>
        <end position="171"/>
    </location>
</feature>
<feature type="helix" evidence="13">
    <location>
        <begin position="173"/>
        <end position="191"/>
    </location>
</feature>
<feature type="helix" evidence="13">
    <location>
        <begin position="214"/>
        <end position="222"/>
    </location>
</feature>
<feature type="turn" evidence="13">
    <location>
        <begin position="226"/>
        <end position="228"/>
    </location>
</feature>
<feature type="helix" evidence="13">
    <location>
        <begin position="239"/>
        <end position="248"/>
    </location>
</feature>
<feature type="helix" evidence="13">
    <location>
        <begin position="286"/>
        <end position="290"/>
    </location>
</feature>
<feature type="strand" evidence="13">
    <location>
        <begin position="293"/>
        <end position="295"/>
    </location>
</feature>
<keyword id="KW-0002">3D-structure</keyword>
<keyword id="KW-0007">Acetylation</keyword>
<keyword id="KW-0948">Aicardi-Goutieres syndrome</keyword>
<keyword id="KW-0225">Disease variant</keyword>
<keyword id="KW-0255">Endonuclease</keyword>
<keyword id="KW-0378">Hydrolase</keyword>
<keyword id="KW-0479">Metal-binding</keyword>
<keyword id="KW-0540">Nuclease</keyword>
<keyword id="KW-0539">Nucleus</keyword>
<keyword id="KW-0597">Phosphoprotein</keyword>
<keyword id="KW-1267">Proteomics identification</keyword>
<keyword id="KW-1185">Reference proteome</keyword>
<protein>
    <recommendedName>
        <fullName>Ribonuclease H2 subunit A</fullName>
        <shortName>RNase H2 subunit A</shortName>
        <ecNumber>3.1.26.4</ecNumber>
    </recommendedName>
    <alternativeName>
        <fullName>Aicardi-Goutieres syndrome 4 protein</fullName>
        <shortName>AGS4</shortName>
    </alternativeName>
    <alternativeName>
        <fullName>RNase H(35)</fullName>
    </alternativeName>
    <alternativeName>
        <fullName>Ribonuclease HI large subunit</fullName>
        <shortName>RNase HI large subunit</shortName>
    </alternativeName>
    <alternativeName>
        <fullName>Ribonuclease HI subunit A</fullName>
    </alternativeName>
</protein>